<organism>
    <name type="scientific">Mus musculus</name>
    <name type="common">Mouse</name>
    <dbReference type="NCBI Taxonomy" id="10090"/>
    <lineage>
        <taxon>Eukaryota</taxon>
        <taxon>Metazoa</taxon>
        <taxon>Chordata</taxon>
        <taxon>Craniata</taxon>
        <taxon>Vertebrata</taxon>
        <taxon>Euteleostomi</taxon>
        <taxon>Mammalia</taxon>
        <taxon>Eutheria</taxon>
        <taxon>Euarchontoglires</taxon>
        <taxon>Glires</taxon>
        <taxon>Rodentia</taxon>
        <taxon>Myomorpha</taxon>
        <taxon>Muroidea</taxon>
        <taxon>Muridae</taxon>
        <taxon>Murinae</taxon>
        <taxon>Mus</taxon>
        <taxon>Mus</taxon>
    </lineage>
</organism>
<accession>Q9ESM6</accession>
<feature type="chain" id="PRO_0000251935" description="Glycerophosphoinositol inositolphosphodiesterase GDPD2">
    <location>
        <begin position="1"/>
        <end position="539"/>
    </location>
</feature>
<feature type="topological domain" description="Cytoplasmic" evidence="1">
    <location>
        <begin position="1"/>
        <end position="40"/>
    </location>
</feature>
<feature type="transmembrane region" description="Helical" evidence="1">
    <location>
        <begin position="41"/>
        <end position="61"/>
    </location>
</feature>
<feature type="topological domain" description="Extracellular" evidence="1">
    <location>
        <begin position="62"/>
        <end position="83"/>
    </location>
</feature>
<feature type="transmembrane region" description="Helical" evidence="1">
    <location>
        <begin position="84"/>
        <end position="104"/>
    </location>
</feature>
<feature type="topological domain" description="Cytoplasmic" evidence="1">
    <location>
        <begin position="105"/>
        <end position="121"/>
    </location>
</feature>
<feature type="transmembrane region" description="Helical" evidence="1">
    <location>
        <begin position="122"/>
        <end position="142"/>
    </location>
</feature>
<feature type="topological domain" description="Extracellular" evidence="1">
    <location>
        <begin position="143"/>
        <end position="154"/>
    </location>
</feature>
<feature type="transmembrane region" description="Helical" evidence="1">
    <location>
        <begin position="155"/>
        <end position="175"/>
    </location>
</feature>
<feature type="topological domain" description="Cytoplasmic" evidence="1">
    <location>
        <begin position="176"/>
        <end position="189"/>
    </location>
</feature>
<feature type="transmembrane region" description="Helical" evidence="1">
    <location>
        <begin position="190"/>
        <end position="210"/>
    </location>
</feature>
<feature type="topological domain" description="Extracellular" evidence="1">
    <location>
        <begin position="211"/>
        <end position="491"/>
    </location>
</feature>
<feature type="transmembrane region" description="Helical" evidence="1">
    <location>
        <begin position="492"/>
        <end position="512"/>
    </location>
</feature>
<feature type="topological domain" description="Cytoplasmic" evidence="1">
    <location>
        <begin position="513"/>
        <end position="539"/>
    </location>
</feature>
<feature type="domain" description="GP-PDE">
    <location>
        <begin position="225"/>
        <end position="480"/>
    </location>
</feature>
<feature type="binding site" evidence="1">
    <location>
        <position position="257"/>
    </location>
    <ligand>
        <name>a divalent metal cation</name>
        <dbReference type="ChEBI" id="CHEBI:60240"/>
    </ligand>
</feature>
<feature type="binding site" evidence="1">
    <location>
        <position position="259"/>
    </location>
    <ligand>
        <name>a divalent metal cation</name>
        <dbReference type="ChEBI" id="CHEBI:60240"/>
    </ligand>
</feature>
<feature type="binding site" evidence="1">
    <location>
        <position position="272"/>
    </location>
    <ligand>
        <name>a divalent metal cation</name>
        <dbReference type="ChEBI" id="CHEBI:60240"/>
    </ligand>
</feature>
<feature type="glycosylation site" description="N-linked (GlcNAc...) asparagine" evidence="1">
    <location>
        <position position="333"/>
    </location>
</feature>
<feature type="mutagenesis site" description="Loss of activity." evidence="4">
    <original>R</original>
    <variation>A</variation>
    <location>
        <position position="231"/>
    </location>
</feature>
<evidence type="ECO:0000255" key="1"/>
<evidence type="ECO:0000269" key="2">
    <source>
    </source>
</evidence>
<evidence type="ECO:0000269" key="3">
    <source>
    </source>
</evidence>
<evidence type="ECO:0000269" key="4">
    <source>
    </source>
</evidence>
<evidence type="ECO:0000305" key="5"/>
<name>GDPD2_MOUSE</name>
<keyword id="KW-1003">Cell membrane</keyword>
<keyword id="KW-0963">Cytoplasm</keyword>
<keyword id="KW-0206">Cytoskeleton</keyword>
<keyword id="KW-0325">Glycoprotein</keyword>
<keyword id="KW-0378">Hydrolase</keyword>
<keyword id="KW-0472">Membrane</keyword>
<keyword id="KW-0479">Metal-binding</keyword>
<keyword id="KW-1185">Reference proteome</keyword>
<keyword id="KW-0812">Transmembrane</keyword>
<keyword id="KW-1133">Transmembrane helix</keyword>
<protein>
    <recommendedName>
        <fullName>Glycerophosphoinositol inositolphosphodiesterase GDPD2</fullName>
        <ecNumber>3.1.4.43</ecNumber>
    </recommendedName>
    <alternativeName>
        <fullName>Glycerophosphodiester phosphodiesterase 3</fullName>
    </alternativeName>
    <alternativeName>
        <fullName>Glycerophosphodiester phosphodiesterase domain-containing protein 2</fullName>
    </alternativeName>
    <alternativeName>
        <fullName>Osteoblast differentiation promoting factor</fullName>
    </alternativeName>
</protein>
<sequence>MADSPGCCSIWARCLHCLYSCHWRKYPKQKMQTSKCDCIWFGLLFLTFLLSLGWLYIGLILLNDLHNFNEFLFRHWGHWMDWSLIVLLVVSLLVTYASLLLLLGLLLQLCGQPLHLHSLHKVLLLLIVLLVAAGLVGLDIQWRQEWHSLRLSLQATAPFLHIGAVAGITLLAWPVADTFYRIHPRGPKVLLLLLFFGVTLVIYLMPLLFISSPCIMKLRDLPPKPGLVGHRGAPMLAPENTLMSLRKTAECGAAVFETDVMVSSDGVPFLMHDERLSRTTNVASVFPERISAHSSDFSWAELQRLNAGTWFLERQPFWGAKKLSGSDRKEAENQTIPALEELLKEAAALNLSIMFDLRRPPRNHTYYDTFVNQTLEAVLSANVSQAMVLWLPDEDRANVQQRAPRMRQIYGHQGGNWTERPQFLNLPYQDLPALDIKALHQDNISVNLFVVNKPWLFSLLWCAGVDSVTTNACQLLQQMQNPLWLLPPQKYLMIWVITDCASILLLLSIFLLRGGCAKRNRTGLETAVLLTKINNFASE</sequence>
<gene>
    <name type="primary">Gdpd2</name>
    <name type="synonym">Gde3</name>
    <name type="synonym">Obdpf</name>
</gene>
<reference key="1">
    <citation type="journal article" date="2003" name="J. Biol. Chem.">
        <title>Novel membrane protein containing glycerophosphodiester phosphodiesterase motif is transiently expressed during osteoblast differentiation.</title>
        <authorList>
            <person name="Yanaka N."/>
            <person name="Imai Y."/>
            <person name="Kawai E."/>
            <person name="Akatsuka H."/>
            <person name="Wakimoto K."/>
            <person name="Nogusa Y."/>
            <person name="Kato N."/>
            <person name="Chiba H."/>
            <person name="Kotani E."/>
            <person name="Omori K."/>
            <person name="Sakurai N."/>
        </authorList>
    </citation>
    <scope>NUCLEOTIDE SEQUENCE [MRNA]</scope>
    <scope>FUNCTION</scope>
    <scope>SUBCELLULAR LOCATION</scope>
    <scope>TISSUE SPECIFICITY</scope>
    <source>
        <tissue>Osteoblast</tissue>
    </source>
</reference>
<reference key="2">
    <citation type="journal article" date="2005" name="Science">
        <title>The transcriptional landscape of the mammalian genome.</title>
        <authorList>
            <person name="Carninci P."/>
            <person name="Kasukawa T."/>
            <person name="Katayama S."/>
            <person name="Gough J."/>
            <person name="Frith M.C."/>
            <person name="Maeda N."/>
            <person name="Oyama R."/>
            <person name="Ravasi T."/>
            <person name="Lenhard B."/>
            <person name="Wells C."/>
            <person name="Kodzius R."/>
            <person name="Shimokawa K."/>
            <person name="Bajic V.B."/>
            <person name="Brenner S.E."/>
            <person name="Batalov S."/>
            <person name="Forrest A.R."/>
            <person name="Zavolan M."/>
            <person name="Davis M.J."/>
            <person name="Wilming L.G."/>
            <person name="Aidinis V."/>
            <person name="Allen J.E."/>
            <person name="Ambesi-Impiombato A."/>
            <person name="Apweiler R."/>
            <person name="Aturaliya R.N."/>
            <person name="Bailey T.L."/>
            <person name="Bansal M."/>
            <person name="Baxter L."/>
            <person name="Beisel K.W."/>
            <person name="Bersano T."/>
            <person name="Bono H."/>
            <person name="Chalk A.M."/>
            <person name="Chiu K.P."/>
            <person name="Choudhary V."/>
            <person name="Christoffels A."/>
            <person name="Clutterbuck D.R."/>
            <person name="Crowe M.L."/>
            <person name="Dalla E."/>
            <person name="Dalrymple B.P."/>
            <person name="de Bono B."/>
            <person name="Della Gatta G."/>
            <person name="di Bernardo D."/>
            <person name="Down T."/>
            <person name="Engstrom P."/>
            <person name="Fagiolini M."/>
            <person name="Faulkner G."/>
            <person name="Fletcher C.F."/>
            <person name="Fukushima T."/>
            <person name="Furuno M."/>
            <person name="Futaki S."/>
            <person name="Gariboldi M."/>
            <person name="Georgii-Hemming P."/>
            <person name="Gingeras T.R."/>
            <person name="Gojobori T."/>
            <person name="Green R.E."/>
            <person name="Gustincich S."/>
            <person name="Harbers M."/>
            <person name="Hayashi Y."/>
            <person name="Hensch T.K."/>
            <person name="Hirokawa N."/>
            <person name="Hill D."/>
            <person name="Huminiecki L."/>
            <person name="Iacono M."/>
            <person name="Ikeo K."/>
            <person name="Iwama A."/>
            <person name="Ishikawa T."/>
            <person name="Jakt M."/>
            <person name="Kanapin A."/>
            <person name="Katoh M."/>
            <person name="Kawasawa Y."/>
            <person name="Kelso J."/>
            <person name="Kitamura H."/>
            <person name="Kitano H."/>
            <person name="Kollias G."/>
            <person name="Krishnan S.P."/>
            <person name="Kruger A."/>
            <person name="Kummerfeld S.K."/>
            <person name="Kurochkin I.V."/>
            <person name="Lareau L.F."/>
            <person name="Lazarevic D."/>
            <person name="Lipovich L."/>
            <person name="Liu J."/>
            <person name="Liuni S."/>
            <person name="McWilliam S."/>
            <person name="Madan Babu M."/>
            <person name="Madera M."/>
            <person name="Marchionni L."/>
            <person name="Matsuda H."/>
            <person name="Matsuzawa S."/>
            <person name="Miki H."/>
            <person name="Mignone F."/>
            <person name="Miyake S."/>
            <person name="Morris K."/>
            <person name="Mottagui-Tabar S."/>
            <person name="Mulder N."/>
            <person name="Nakano N."/>
            <person name="Nakauchi H."/>
            <person name="Ng P."/>
            <person name="Nilsson R."/>
            <person name="Nishiguchi S."/>
            <person name="Nishikawa S."/>
            <person name="Nori F."/>
            <person name="Ohara O."/>
            <person name="Okazaki Y."/>
            <person name="Orlando V."/>
            <person name="Pang K.C."/>
            <person name="Pavan W.J."/>
            <person name="Pavesi G."/>
            <person name="Pesole G."/>
            <person name="Petrovsky N."/>
            <person name="Piazza S."/>
            <person name="Reed J."/>
            <person name="Reid J.F."/>
            <person name="Ring B.Z."/>
            <person name="Ringwald M."/>
            <person name="Rost B."/>
            <person name="Ruan Y."/>
            <person name="Salzberg S.L."/>
            <person name="Sandelin A."/>
            <person name="Schneider C."/>
            <person name="Schoenbach C."/>
            <person name="Sekiguchi K."/>
            <person name="Semple C.A."/>
            <person name="Seno S."/>
            <person name="Sessa L."/>
            <person name="Sheng Y."/>
            <person name="Shibata Y."/>
            <person name="Shimada H."/>
            <person name="Shimada K."/>
            <person name="Silva D."/>
            <person name="Sinclair B."/>
            <person name="Sperling S."/>
            <person name="Stupka E."/>
            <person name="Sugiura K."/>
            <person name="Sultana R."/>
            <person name="Takenaka Y."/>
            <person name="Taki K."/>
            <person name="Tammoja K."/>
            <person name="Tan S.L."/>
            <person name="Tang S."/>
            <person name="Taylor M.S."/>
            <person name="Tegner J."/>
            <person name="Teichmann S.A."/>
            <person name="Ueda H.R."/>
            <person name="van Nimwegen E."/>
            <person name="Verardo R."/>
            <person name="Wei C.L."/>
            <person name="Yagi K."/>
            <person name="Yamanishi H."/>
            <person name="Zabarovsky E."/>
            <person name="Zhu S."/>
            <person name="Zimmer A."/>
            <person name="Hide W."/>
            <person name="Bult C."/>
            <person name="Grimmond S.M."/>
            <person name="Teasdale R.D."/>
            <person name="Liu E.T."/>
            <person name="Brusic V."/>
            <person name="Quackenbush J."/>
            <person name="Wahlestedt C."/>
            <person name="Mattick J.S."/>
            <person name="Hume D.A."/>
            <person name="Kai C."/>
            <person name="Sasaki D."/>
            <person name="Tomaru Y."/>
            <person name="Fukuda S."/>
            <person name="Kanamori-Katayama M."/>
            <person name="Suzuki M."/>
            <person name="Aoki J."/>
            <person name="Arakawa T."/>
            <person name="Iida J."/>
            <person name="Imamura K."/>
            <person name="Itoh M."/>
            <person name="Kato T."/>
            <person name="Kawaji H."/>
            <person name="Kawagashira N."/>
            <person name="Kawashima T."/>
            <person name="Kojima M."/>
            <person name="Kondo S."/>
            <person name="Konno H."/>
            <person name="Nakano K."/>
            <person name="Ninomiya N."/>
            <person name="Nishio T."/>
            <person name="Okada M."/>
            <person name="Plessy C."/>
            <person name="Shibata K."/>
            <person name="Shiraki T."/>
            <person name="Suzuki S."/>
            <person name="Tagami M."/>
            <person name="Waki K."/>
            <person name="Watahiki A."/>
            <person name="Okamura-Oho Y."/>
            <person name="Suzuki H."/>
            <person name="Kawai J."/>
            <person name="Hayashizaki Y."/>
        </authorList>
    </citation>
    <scope>NUCLEOTIDE SEQUENCE [LARGE SCALE MRNA]</scope>
    <source>
        <strain>C57BL/6J</strain>
        <tissue>Cecum</tissue>
    </source>
</reference>
<reference key="3">
    <citation type="journal article" date="2004" name="Genome Res.">
        <title>The status, quality, and expansion of the NIH full-length cDNA project: the Mammalian Gene Collection (MGC).</title>
        <authorList>
            <consortium name="The MGC Project Team"/>
        </authorList>
    </citation>
    <scope>NUCLEOTIDE SEQUENCE [LARGE SCALE MRNA]</scope>
    <source>
        <strain>FVB/N</strain>
        <tissue>Mammary tumor</tissue>
    </source>
</reference>
<reference key="4">
    <citation type="journal article" date="2004" name="Gene">
        <title>Isolation and characterization of two serpentine membrane proteins containing glycerophosphodiester phosphodiesterase, GDE2 and GDE6.</title>
        <authorList>
            <person name="Nogusa Y."/>
            <person name="Fujioka Y."/>
            <person name="Komatsu R."/>
            <person name="Kato N."/>
            <person name="Yanaka N."/>
        </authorList>
    </citation>
    <scope>TISSUE SPECIFICITY</scope>
</reference>
<reference key="5">
    <citation type="journal article" date="2009" name="J. Biol. Chem.">
        <title>The developmentally regulated osteoblast phosphodiesterase GDE3 is glycerophosphoinositol-specific and modulates cell growth.</title>
        <authorList>
            <person name="Corda D."/>
            <person name="Kudo T."/>
            <person name="Zizza P."/>
            <person name="Iurisci C."/>
            <person name="Kawai E."/>
            <person name="Kato N."/>
            <person name="Yanaka N."/>
            <person name="Mariggio S."/>
        </authorList>
    </citation>
    <scope>FUNCTION</scope>
    <scope>BIOPHYSICOCHEMICAL PROPERTIES</scope>
    <scope>MUTAGENESIS OF ARG-231</scope>
</reference>
<reference key="6">
    <citation type="journal article" date="2010" name="Cell">
        <title>A tissue-specific atlas of mouse protein phosphorylation and expression.</title>
        <authorList>
            <person name="Huttlin E.L."/>
            <person name="Jedrychowski M.P."/>
            <person name="Elias J.E."/>
            <person name="Goswami T."/>
            <person name="Rad R."/>
            <person name="Beausoleil S.A."/>
            <person name="Villen J."/>
            <person name="Haas W."/>
            <person name="Sowa M.E."/>
            <person name="Gygi S.P."/>
        </authorList>
    </citation>
    <scope>IDENTIFICATION BY MASS SPECTROMETRY [LARGE SCALE ANALYSIS]</scope>
    <source>
        <tissue>Spleen</tissue>
    </source>
</reference>
<comment type="function">
    <text evidence="2 4">Has glycerophosphoinositol inositolphosphodiesterase activity and specifically hydrolyzes glycerophosphoinositol, with no activity for other substrates such as glycerophosphoinositol 4-phosphate, glycerophosphocholine, glycerophosphoethanolamine, and glycerophosphoserine. Accelerates the program of osteoblast differentiation and growth. May play a role in remodeling of the actin cytoskeleton.</text>
</comment>
<comment type="catalytic activity">
    <reaction>
        <text>sn-glycero-3-phospho-1D-myo-inositol + H2O = 1D-myo-inositol 1-phosphate + glycerol + H(+)</text>
        <dbReference type="Rhea" id="RHEA:14033"/>
        <dbReference type="ChEBI" id="CHEBI:15377"/>
        <dbReference type="ChEBI" id="CHEBI:15378"/>
        <dbReference type="ChEBI" id="CHEBI:17754"/>
        <dbReference type="ChEBI" id="CHEBI:58433"/>
        <dbReference type="ChEBI" id="CHEBI:58444"/>
        <dbReference type="EC" id="3.1.4.43"/>
    </reaction>
</comment>
<comment type="cofactor">
    <cofactor>
        <name>Ca(2+)</name>
        <dbReference type="ChEBI" id="CHEBI:29108"/>
    </cofactor>
</comment>
<comment type="biophysicochemical properties">
    <kinetics>
        <KM evidence="4">97.2 mM for glycerophosphoinositol</KM>
        <Vmax evidence="4">1.9 nmol/min/mg enzyme</Vmax>
    </kinetics>
</comment>
<comment type="subcellular location">
    <subcellularLocation>
        <location evidence="2">Cell membrane</location>
        <topology evidence="2">Multi-pass membrane protein</topology>
    </subcellularLocation>
    <subcellularLocation>
        <location evidence="2">Cytoplasm</location>
    </subcellularLocation>
    <subcellularLocation>
        <location evidence="2">Cytoplasm</location>
        <location evidence="2">Cytoskeleton</location>
    </subcellularLocation>
    <text>Colocalizes with the actin cytoskeleton.</text>
</comment>
<comment type="tissue specificity">
    <text evidence="2 3">Detected in spleen, femur and calvaria.</text>
</comment>
<comment type="developmental stage">
    <text>Up-regulated during osteoblast differentiation. Detected at low levels in mature osteoblasts.</text>
</comment>
<comment type="similarity">
    <text evidence="5">Belongs to the glycerophosphoryl diester phosphodiesterase family.</text>
</comment>
<comment type="caution">
    <text evidence="5">The catalytic domain of Gdpd2 is oriented extracellularly; Glycerophosphoinositol is hydrolyzed in the medium of cells overexpressing Gdpd2, whereas intracellular levels of glycerophosphoinositol is not affected.</text>
</comment>
<proteinExistence type="evidence at protein level"/>
<dbReference type="EC" id="3.1.4.43"/>
<dbReference type="EMBL" id="AB048364">
    <property type="protein sequence ID" value="BAB13351.1"/>
    <property type="molecule type" value="mRNA"/>
</dbReference>
<dbReference type="EMBL" id="AK018634">
    <property type="protein sequence ID" value="BAB31318.1"/>
    <property type="molecule type" value="mRNA"/>
</dbReference>
<dbReference type="EMBL" id="BC038274">
    <property type="protein sequence ID" value="AAH38274.1"/>
    <property type="molecule type" value="mRNA"/>
</dbReference>
<dbReference type="CCDS" id="CCDS30306.1"/>
<dbReference type="RefSeq" id="NP_001292870.1">
    <property type="nucleotide sequence ID" value="NM_001305941.1"/>
</dbReference>
<dbReference type="RefSeq" id="NP_001345436.1">
    <property type="nucleotide sequence ID" value="NM_001358507.1"/>
</dbReference>
<dbReference type="RefSeq" id="NP_076097.1">
    <property type="nucleotide sequence ID" value="NM_023608.4"/>
</dbReference>
<dbReference type="RefSeq" id="XP_006528358.1">
    <property type="nucleotide sequence ID" value="XM_006528295.1"/>
</dbReference>
<dbReference type="RefSeq" id="XP_036017993.1">
    <property type="nucleotide sequence ID" value="XM_036162100.1"/>
</dbReference>
<dbReference type="SMR" id="Q9ESM6"/>
<dbReference type="FunCoup" id="Q9ESM6">
    <property type="interactions" value="9"/>
</dbReference>
<dbReference type="STRING" id="10090.ENSMUSP00000019503"/>
<dbReference type="GlyCosmos" id="Q9ESM6">
    <property type="glycosylation" value="1 site, No reported glycans"/>
</dbReference>
<dbReference type="GlyGen" id="Q9ESM6">
    <property type="glycosylation" value="2 sites, 2 N-linked glycans (2 sites)"/>
</dbReference>
<dbReference type="iPTMnet" id="Q9ESM6"/>
<dbReference type="PhosphoSitePlus" id="Q9ESM6"/>
<dbReference type="SwissPalm" id="Q9ESM6"/>
<dbReference type="PaxDb" id="10090-ENSMUSP00000019503"/>
<dbReference type="PeptideAtlas" id="Q9ESM6"/>
<dbReference type="ProteomicsDB" id="265740"/>
<dbReference type="Antibodypedia" id="27419">
    <property type="antibodies" value="130 antibodies from 20 providers"/>
</dbReference>
<dbReference type="DNASU" id="71584"/>
<dbReference type="Ensembl" id="ENSMUST00000019503.14">
    <property type="protein sequence ID" value="ENSMUSP00000019503.8"/>
    <property type="gene ID" value="ENSMUSG00000019359.15"/>
</dbReference>
<dbReference type="Ensembl" id="ENSMUST00000113744.2">
    <property type="protein sequence ID" value="ENSMUSP00000109373.2"/>
    <property type="gene ID" value="ENSMUSG00000019359.15"/>
</dbReference>
<dbReference type="GeneID" id="71584"/>
<dbReference type="KEGG" id="mmu:71584"/>
<dbReference type="UCSC" id="uc009twi.2">
    <property type="organism name" value="mouse"/>
</dbReference>
<dbReference type="AGR" id="MGI:1918834"/>
<dbReference type="CTD" id="54857"/>
<dbReference type="MGI" id="MGI:1918834">
    <property type="gene designation" value="Gdpd2"/>
</dbReference>
<dbReference type="VEuPathDB" id="HostDB:ENSMUSG00000019359"/>
<dbReference type="eggNOG" id="KOG2258">
    <property type="taxonomic scope" value="Eukaryota"/>
</dbReference>
<dbReference type="GeneTree" id="ENSGT00940000159625"/>
<dbReference type="HOGENOM" id="CLU_024259_3_0_1"/>
<dbReference type="InParanoid" id="Q9ESM6"/>
<dbReference type="OMA" id="DPPGCCS"/>
<dbReference type="OrthoDB" id="1058301at2759"/>
<dbReference type="PhylomeDB" id="Q9ESM6"/>
<dbReference type="TreeFam" id="TF313692"/>
<dbReference type="SABIO-RK" id="Q9ESM6"/>
<dbReference type="BioGRID-ORCS" id="71584">
    <property type="hits" value="0 hits in 64 CRISPR screens"/>
</dbReference>
<dbReference type="ChiTaRS" id="Gdpd2">
    <property type="organism name" value="mouse"/>
</dbReference>
<dbReference type="PRO" id="PR:Q9ESM6"/>
<dbReference type="Proteomes" id="UP000000589">
    <property type="component" value="Chromosome X"/>
</dbReference>
<dbReference type="RNAct" id="Q9ESM6">
    <property type="molecule type" value="protein"/>
</dbReference>
<dbReference type="Bgee" id="ENSMUSG00000019359">
    <property type="expression patterns" value="Expressed in small intestine Peyer's patch and 116 other cell types or tissues"/>
</dbReference>
<dbReference type="GO" id="GO:0005884">
    <property type="term" value="C:actin filament"/>
    <property type="evidence" value="ECO:0000314"/>
    <property type="project" value="MGI"/>
</dbReference>
<dbReference type="GO" id="GO:0005737">
    <property type="term" value="C:cytoplasm"/>
    <property type="evidence" value="ECO:0007669"/>
    <property type="project" value="UniProtKB-SubCell"/>
</dbReference>
<dbReference type="GO" id="GO:0030027">
    <property type="term" value="C:lamellipodium"/>
    <property type="evidence" value="ECO:0000314"/>
    <property type="project" value="MGI"/>
</dbReference>
<dbReference type="GO" id="GO:0005886">
    <property type="term" value="C:plasma membrane"/>
    <property type="evidence" value="ECO:0000314"/>
    <property type="project" value="MGI"/>
</dbReference>
<dbReference type="GO" id="GO:0047394">
    <property type="term" value="F:glycerophosphoinositol inositolphosphodiesterase activity"/>
    <property type="evidence" value="ECO:0007669"/>
    <property type="project" value="UniProtKB-EC"/>
</dbReference>
<dbReference type="GO" id="GO:0046872">
    <property type="term" value="F:metal ion binding"/>
    <property type="evidence" value="ECO:0007669"/>
    <property type="project" value="UniProtKB-KW"/>
</dbReference>
<dbReference type="GO" id="GO:0007015">
    <property type="term" value="P:actin filament organization"/>
    <property type="evidence" value="ECO:0000314"/>
    <property type="project" value="MGI"/>
</dbReference>
<dbReference type="GO" id="GO:0006629">
    <property type="term" value="P:lipid metabolic process"/>
    <property type="evidence" value="ECO:0007669"/>
    <property type="project" value="InterPro"/>
</dbReference>
<dbReference type="GO" id="GO:0045669">
    <property type="term" value="P:positive regulation of osteoblast differentiation"/>
    <property type="evidence" value="ECO:0000314"/>
    <property type="project" value="MGI"/>
</dbReference>
<dbReference type="FunFam" id="3.20.20.190:FF:000028">
    <property type="entry name" value="Glycerophosphodiester phosphodiesterase domain-containing protein 5"/>
    <property type="match status" value="1"/>
</dbReference>
<dbReference type="Gene3D" id="3.20.20.190">
    <property type="entry name" value="Phosphatidylinositol (PI) phosphodiesterase"/>
    <property type="match status" value="1"/>
</dbReference>
<dbReference type="InterPro" id="IPR030395">
    <property type="entry name" value="GP_PDE_dom"/>
</dbReference>
<dbReference type="InterPro" id="IPR017946">
    <property type="entry name" value="PLC-like_Pdiesterase_TIM-brl"/>
</dbReference>
<dbReference type="PANTHER" id="PTHR23344:SF1">
    <property type="entry name" value="GLYCEROPHOSPHOINOSITOL INOSITOLPHOSPHODIESTERASE GDPD2"/>
    <property type="match status" value="1"/>
</dbReference>
<dbReference type="PANTHER" id="PTHR23344">
    <property type="entry name" value="GLYCEROPHOSPHORYL DIESTER PHOSPHODIESTERASE"/>
    <property type="match status" value="1"/>
</dbReference>
<dbReference type="Pfam" id="PF03009">
    <property type="entry name" value="GDPD"/>
    <property type="match status" value="1"/>
</dbReference>
<dbReference type="Pfam" id="PF13653">
    <property type="entry name" value="GDPD_2"/>
    <property type="match status" value="1"/>
</dbReference>
<dbReference type="SUPFAM" id="SSF51695">
    <property type="entry name" value="PLC-like phosphodiesterases"/>
    <property type="match status" value="1"/>
</dbReference>
<dbReference type="PROSITE" id="PS51704">
    <property type="entry name" value="GP_PDE"/>
    <property type="match status" value="1"/>
</dbReference>